<organism>
    <name type="scientific">Salmonella paratyphi A (strain ATCC 9150 / SARB42)</name>
    <dbReference type="NCBI Taxonomy" id="295319"/>
    <lineage>
        <taxon>Bacteria</taxon>
        <taxon>Pseudomonadati</taxon>
        <taxon>Pseudomonadota</taxon>
        <taxon>Gammaproteobacteria</taxon>
        <taxon>Enterobacterales</taxon>
        <taxon>Enterobacteriaceae</taxon>
        <taxon>Salmonella</taxon>
    </lineage>
</organism>
<gene>
    <name evidence="1" type="primary">cysG</name>
    <name type="ordered locus">SPA3343</name>
</gene>
<protein>
    <recommendedName>
        <fullName evidence="1">Siroheme synthase</fullName>
    </recommendedName>
    <domain>
        <recommendedName>
            <fullName evidence="1">Uroporphyrinogen-III C-methyltransferase</fullName>
            <shortName evidence="1">Urogen III methylase</shortName>
            <ecNumber evidence="1">2.1.1.107</ecNumber>
        </recommendedName>
        <alternativeName>
            <fullName evidence="1">SUMT</fullName>
        </alternativeName>
        <alternativeName>
            <fullName evidence="1">Uroporphyrinogen III methylase</fullName>
            <shortName evidence="1">UROM</shortName>
        </alternativeName>
    </domain>
    <domain>
        <recommendedName>
            <fullName evidence="1">Precorrin-2 dehydrogenase</fullName>
            <ecNumber evidence="1">1.3.1.76</ecNumber>
        </recommendedName>
    </domain>
    <domain>
        <recommendedName>
            <fullName evidence="1">Sirohydrochlorin ferrochelatase</fullName>
            <ecNumber evidence="1">4.99.1.4</ecNumber>
        </recommendedName>
    </domain>
</protein>
<keyword id="KW-0169">Cobalamin biosynthesis</keyword>
<keyword id="KW-0456">Lyase</keyword>
<keyword id="KW-0489">Methyltransferase</keyword>
<keyword id="KW-0511">Multifunctional enzyme</keyword>
<keyword id="KW-0520">NAD</keyword>
<keyword id="KW-0560">Oxidoreductase</keyword>
<keyword id="KW-0597">Phosphoprotein</keyword>
<keyword id="KW-0627">Porphyrin biosynthesis</keyword>
<keyword id="KW-0949">S-adenosyl-L-methionine</keyword>
<keyword id="KW-0808">Transferase</keyword>
<proteinExistence type="inferred from homology"/>
<reference key="1">
    <citation type="journal article" date="2004" name="Nat. Genet.">
        <title>Comparison of genome degradation in Paratyphi A and Typhi, human-restricted serovars of Salmonella enterica that cause typhoid.</title>
        <authorList>
            <person name="McClelland M."/>
            <person name="Sanderson K.E."/>
            <person name="Clifton S.W."/>
            <person name="Latreille P."/>
            <person name="Porwollik S."/>
            <person name="Sabo A."/>
            <person name="Meyer R."/>
            <person name="Bieri T."/>
            <person name="Ozersky P."/>
            <person name="McLellan M."/>
            <person name="Harkins C.R."/>
            <person name="Wang C."/>
            <person name="Nguyen C."/>
            <person name="Berghoff A."/>
            <person name="Elliott G."/>
            <person name="Kohlberg S."/>
            <person name="Strong C."/>
            <person name="Du F."/>
            <person name="Carter J."/>
            <person name="Kremizki C."/>
            <person name="Layman D."/>
            <person name="Leonard S."/>
            <person name="Sun H."/>
            <person name="Fulton L."/>
            <person name="Nash W."/>
            <person name="Miner T."/>
            <person name="Minx P."/>
            <person name="Delehaunty K."/>
            <person name="Fronick C."/>
            <person name="Magrini V."/>
            <person name="Nhan M."/>
            <person name="Warren W."/>
            <person name="Florea L."/>
            <person name="Spieth J."/>
            <person name="Wilson R.K."/>
        </authorList>
    </citation>
    <scope>NUCLEOTIDE SEQUENCE [LARGE SCALE GENOMIC DNA]</scope>
    <source>
        <strain>ATCC 9150 / SARB42</strain>
    </source>
</reference>
<feature type="chain" id="PRO_0000330554" description="Siroheme synthase">
    <location>
        <begin position="1"/>
        <end position="457"/>
    </location>
</feature>
<feature type="region of interest" description="Precorrin-2 dehydrogenase /sirohydrochlorin ferrochelatase" evidence="1">
    <location>
        <begin position="1"/>
        <end position="204"/>
    </location>
</feature>
<feature type="region of interest" description="Uroporphyrinogen-III C-methyltransferase" evidence="1">
    <location>
        <begin position="216"/>
        <end position="457"/>
    </location>
</feature>
<feature type="active site" description="Proton acceptor" evidence="1">
    <location>
        <position position="248"/>
    </location>
</feature>
<feature type="active site" description="Proton donor" evidence="1">
    <location>
        <position position="270"/>
    </location>
</feature>
<feature type="binding site" evidence="1">
    <location>
        <begin position="22"/>
        <end position="23"/>
    </location>
    <ligand>
        <name>NAD(+)</name>
        <dbReference type="ChEBI" id="CHEBI:57540"/>
    </ligand>
</feature>
<feature type="binding site" evidence="1">
    <location>
        <begin position="43"/>
        <end position="44"/>
    </location>
    <ligand>
        <name>NAD(+)</name>
        <dbReference type="ChEBI" id="CHEBI:57540"/>
    </ligand>
</feature>
<feature type="binding site" evidence="1">
    <location>
        <position position="225"/>
    </location>
    <ligand>
        <name>S-adenosyl-L-methionine</name>
        <dbReference type="ChEBI" id="CHEBI:59789"/>
    </ligand>
</feature>
<feature type="binding site" evidence="1">
    <location>
        <begin position="301"/>
        <end position="303"/>
    </location>
    <ligand>
        <name>S-adenosyl-L-methionine</name>
        <dbReference type="ChEBI" id="CHEBI:59789"/>
    </ligand>
</feature>
<feature type="binding site" evidence="1">
    <location>
        <position position="306"/>
    </location>
    <ligand>
        <name>S-adenosyl-L-methionine</name>
        <dbReference type="ChEBI" id="CHEBI:59789"/>
    </ligand>
</feature>
<feature type="binding site" evidence="1">
    <location>
        <begin position="331"/>
        <end position="332"/>
    </location>
    <ligand>
        <name>S-adenosyl-L-methionine</name>
        <dbReference type="ChEBI" id="CHEBI:59789"/>
    </ligand>
</feature>
<feature type="binding site" evidence="1">
    <location>
        <position position="382"/>
    </location>
    <ligand>
        <name>S-adenosyl-L-methionine</name>
        <dbReference type="ChEBI" id="CHEBI:59789"/>
    </ligand>
</feature>
<feature type="binding site" evidence="1">
    <location>
        <position position="411"/>
    </location>
    <ligand>
        <name>S-adenosyl-L-methionine</name>
        <dbReference type="ChEBI" id="CHEBI:59789"/>
    </ligand>
</feature>
<feature type="modified residue" description="Phosphoserine" evidence="1">
    <location>
        <position position="128"/>
    </location>
</feature>
<name>CYSG_SALPA</name>
<comment type="function">
    <text evidence="1">Multifunctional enzyme that catalyzes the SAM-dependent methylations of uroporphyrinogen III at position C-2 and C-7 to form precorrin-2 via precorrin-1. Then it catalyzes the NAD-dependent ring dehydrogenation of precorrin-2 to yield sirohydrochlorin. Finally, it catalyzes the ferrochelation of sirohydrochlorin to yield siroheme.</text>
</comment>
<comment type="catalytic activity">
    <reaction evidence="1">
        <text>uroporphyrinogen III + 2 S-adenosyl-L-methionine = precorrin-2 + 2 S-adenosyl-L-homocysteine + H(+)</text>
        <dbReference type="Rhea" id="RHEA:32459"/>
        <dbReference type="ChEBI" id="CHEBI:15378"/>
        <dbReference type="ChEBI" id="CHEBI:57308"/>
        <dbReference type="ChEBI" id="CHEBI:57856"/>
        <dbReference type="ChEBI" id="CHEBI:58827"/>
        <dbReference type="ChEBI" id="CHEBI:59789"/>
        <dbReference type="EC" id="2.1.1.107"/>
    </reaction>
</comment>
<comment type="catalytic activity">
    <reaction evidence="1">
        <text>precorrin-2 + NAD(+) = sirohydrochlorin + NADH + 2 H(+)</text>
        <dbReference type="Rhea" id="RHEA:15613"/>
        <dbReference type="ChEBI" id="CHEBI:15378"/>
        <dbReference type="ChEBI" id="CHEBI:57540"/>
        <dbReference type="ChEBI" id="CHEBI:57945"/>
        <dbReference type="ChEBI" id="CHEBI:58351"/>
        <dbReference type="ChEBI" id="CHEBI:58827"/>
        <dbReference type="EC" id="1.3.1.76"/>
    </reaction>
</comment>
<comment type="catalytic activity">
    <reaction evidence="1">
        <text>siroheme + 2 H(+) = sirohydrochlorin + Fe(2+)</text>
        <dbReference type="Rhea" id="RHEA:24360"/>
        <dbReference type="ChEBI" id="CHEBI:15378"/>
        <dbReference type="ChEBI" id="CHEBI:29033"/>
        <dbReference type="ChEBI" id="CHEBI:58351"/>
        <dbReference type="ChEBI" id="CHEBI:60052"/>
        <dbReference type="EC" id="4.99.1.4"/>
    </reaction>
</comment>
<comment type="pathway">
    <text evidence="1">Cofactor biosynthesis; adenosylcobalamin biosynthesis; precorrin-2 from uroporphyrinogen III: step 1/1.</text>
</comment>
<comment type="pathway">
    <text evidence="1">Cofactor biosynthesis; adenosylcobalamin biosynthesis; sirohydrochlorin from precorrin-2: step 1/1.</text>
</comment>
<comment type="pathway">
    <text evidence="1">Porphyrin-containing compound metabolism; siroheme biosynthesis; precorrin-2 from uroporphyrinogen III: step 1/1.</text>
</comment>
<comment type="pathway">
    <text evidence="1">Porphyrin-containing compound metabolism; siroheme biosynthesis; siroheme from sirohydrochlorin: step 1/1.</text>
</comment>
<comment type="pathway">
    <text evidence="1">Porphyrin-containing compound metabolism; siroheme biosynthesis; sirohydrochlorin from precorrin-2: step 1/1.</text>
</comment>
<comment type="similarity">
    <text evidence="1">In the N-terminal section; belongs to the precorrin-2 dehydrogenase / sirohydrochlorin ferrochelatase family.</text>
</comment>
<comment type="similarity">
    <text evidence="1">In the C-terminal section; belongs to the precorrin methyltransferase family.</text>
</comment>
<dbReference type="EC" id="2.1.1.107" evidence="1"/>
<dbReference type="EC" id="1.3.1.76" evidence="1"/>
<dbReference type="EC" id="4.99.1.4" evidence="1"/>
<dbReference type="EMBL" id="CP000026">
    <property type="protein sequence ID" value="AAV79158.1"/>
    <property type="molecule type" value="Genomic_DNA"/>
</dbReference>
<dbReference type="RefSeq" id="WP_000349887.1">
    <property type="nucleotide sequence ID" value="NC_006511.1"/>
</dbReference>
<dbReference type="SMR" id="Q5PLV8"/>
<dbReference type="KEGG" id="spt:SPA3343"/>
<dbReference type="HOGENOM" id="CLU_011276_2_0_6"/>
<dbReference type="UniPathway" id="UPA00148">
    <property type="reaction ID" value="UER00211"/>
</dbReference>
<dbReference type="UniPathway" id="UPA00148">
    <property type="reaction ID" value="UER00222"/>
</dbReference>
<dbReference type="UniPathway" id="UPA00262">
    <property type="reaction ID" value="UER00211"/>
</dbReference>
<dbReference type="UniPathway" id="UPA00262">
    <property type="reaction ID" value="UER00222"/>
</dbReference>
<dbReference type="UniPathway" id="UPA00262">
    <property type="reaction ID" value="UER00376"/>
</dbReference>
<dbReference type="Proteomes" id="UP000008185">
    <property type="component" value="Chromosome"/>
</dbReference>
<dbReference type="GO" id="GO:0051287">
    <property type="term" value="F:NAD binding"/>
    <property type="evidence" value="ECO:0007669"/>
    <property type="project" value="InterPro"/>
</dbReference>
<dbReference type="GO" id="GO:0043115">
    <property type="term" value="F:precorrin-2 dehydrogenase activity"/>
    <property type="evidence" value="ECO:0007669"/>
    <property type="project" value="UniProtKB-UniRule"/>
</dbReference>
<dbReference type="GO" id="GO:0051266">
    <property type="term" value="F:sirohydrochlorin ferrochelatase activity"/>
    <property type="evidence" value="ECO:0007669"/>
    <property type="project" value="UniProtKB-EC"/>
</dbReference>
<dbReference type="GO" id="GO:0004851">
    <property type="term" value="F:uroporphyrin-III C-methyltransferase activity"/>
    <property type="evidence" value="ECO:0007669"/>
    <property type="project" value="UniProtKB-UniRule"/>
</dbReference>
<dbReference type="GO" id="GO:0009236">
    <property type="term" value="P:cobalamin biosynthetic process"/>
    <property type="evidence" value="ECO:0007669"/>
    <property type="project" value="UniProtKB-UniRule"/>
</dbReference>
<dbReference type="GO" id="GO:0032259">
    <property type="term" value="P:methylation"/>
    <property type="evidence" value="ECO:0007669"/>
    <property type="project" value="UniProtKB-KW"/>
</dbReference>
<dbReference type="GO" id="GO:0019354">
    <property type="term" value="P:siroheme biosynthetic process"/>
    <property type="evidence" value="ECO:0007669"/>
    <property type="project" value="UniProtKB-UniRule"/>
</dbReference>
<dbReference type="CDD" id="cd11642">
    <property type="entry name" value="SUMT"/>
    <property type="match status" value="1"/>
</dbReference>
<dbReference type="FunFam" id="1.10.8.210:FF:000001">
    <property type="entry name" value="Siroheme synthase"/>
    <property type="match status" value="1"/>
</dbReference>
<dbReference type="FunFam" id="3.30.160.110:FF:000001">
    <property type="entry name" value="Siroheme synthase"/>
    <property type="match status" value="1"/>
</dbReference>
<dbReference type="FunFam" id="3.30.950.10:FF:000001">
    <property type="entry name" value="Siroheme synthase"/>
    <property type="match status" value="1"/>
</dbReference>
<dbReference type="FunFam" id="3.40.1010.10:FF:000001">
    <property type="entry name" value="Siroheme synthase"/>
    <property type="match status" value="1"/>
</dbReference>
<dbReference type="FunFam" id="3.40.50.720:FF:000092">
    <property type="entry name" value="Siroheme synthase"/>
    <property type="match status" value="1"/>
</dbReference>
<dbReference type="Gene3D" id="3.40.1010.10">
    <property type="entry name" value="Cobalt-precorrin-4 Transmethylase, Domain 1"/>
    <property type="match status" value="1"/>
</dbReference>
<dbReference type="Gene3D" id="3.30.950.10">
    <property type="entry name" value="Methyltransferase, Cobalt-precorrin-4 Transmethylase, Domain 2"/>
    <property type="match status" value="1"/>
</dbReference>
<dbReference type="Gene3D" id="3.40.50.720">
    <property type="entry name" value="NAD(P)-binding Rossmann-like Domain"/>
    <property type="match status" value="1"/>
</dbReference>
<dbReference type="Gene3D" id="1.10.8.210">
    <property type="entry name" value="Sirohaem synthase, dimerisation domain"/>
    <property type="match status" value="1"/>
</dbReference>
<dbReference type="Gene3D" id="3.30.160.110">
    <property type="entry name" value="Siroheme synthase, domain 2"/>
    <property type="match status" value="1"/>
</dbReference>
<dbReference type="HAMAP" id="MF_01646">
    <property type="entry name" value="Siroheme_synth"/>
    <property type="match status" value="1"/>
</dbReference>
<dbReference type="InterPro" id="IPR000878">
    <property type="entry name" value="4pyrrol_Mease"/>
</dbReference>
<dbReference type="InterPro" id="IPR035996">
    <property type="entry name" value="4pyrrol_Methylase_sf"/>
</dbReference>
<dbReference type="InterPro" id="IPR014777">
    <property type="entry name" value="4pyrrole_Mease_sub1"/>
</dbReference>
<dbReference type="InterPro" id="IPR014776">
    <property type="entry name" value="4pyrrole_Mease_sub2"/>
</dbReference>
<dbReference type="InterPro" id="IPR006366">
    <property type="entry name" value="CobA/CysG_C"/>
</dbReference>
<dbReference type="InterPro" id="IPR036291">
    <property type="entry name" value="NAD(P)-bd_dom_sf"/>
</dbReference>
<dbReference type="InterPro" id="IPR050161">
    <property type="entry name" value="Siro_Cobalamin_biosynth"/>
</dbReference>
<dbReference type="InterPro" id="IPR037115">
    <property type="entry name" value="Sirohaem_synt_dimer_dom_sf"/>
</dbReference>
<dbReference type="InterPro" id="IPR012409">
    <property type="entry name" value="Sirohaem_synth"/>
</dbReference>
<dbReference type="InterPro" id="IPR028281">
    <property type="entry name" value="Sirohaem_synthase_central"/>
</dbReference>
<dbReference type="InterPro" id="IPR019478">
    <property type="entry name" value="Sirohaem_synthase_dimer_dom"/>
</dbReference>
<dbReference type="InterPro" id="IPR006367">
    <property type="entry name" value="Sirohaem_synthase_N"/>
</dbReference>
<dbReference type="InterPro" id="IPR003043">
    <property type="entry name" value="Uropor_MeTrfase_CS"/>
</dbReference>
<dbReference type="NCBIfam" id="TIGR01469">
    <property type="entry name" value="cobA_cysG_Cterm"/>
    <property type="match status" value="1"/>
</dbReference>
<dbReference type="NCBIfam" id="TIGR01470">
    <property type="entry name" value="cysG_Nterm"/>
    <property type="match status" value="1"/>
</dbReference>
<dbReference type="NCBIfam" id="NF004790">
    <property type="entry name" value="PRK06136.1"/>
    <property type="match status" value="1"/>
</dbReference>
<dbReference type="NCBIfam" id="NF007922">
    <property type="entry name" value="PRK10637.1"/>
    <property type="match status" value="1"/>
</dbReference>
<dbReference type="PANTHER" id="PTHR45790:SF1">
    <property type="entry name" value="SIROHEME SYNTHASE"/>
    <property type="match status" value="1"/>
</dbReference>
<dbReference type="PANTHER" id="PTHR45790">
    <property type="entry name" value="SIROHEME SYNTHASE-RELATED"/>
    <property type="match status" value="1"/>
</dbReference>
<dbReference type="Pfam" id="PF10414">
    <property type="entry name" value="CysG_dimeriser"/>
    <property type="match status" value="1"/>
</dbReference>
<dbReference type="Pfam" id="PF13241">
    <property type="entry name" value="NAD_binding_7"/>
    <property type="match status" value="1"/>
</dbReference>
<dbReference type="Pfam" id="PF14824">
    <property type="entry name" value="Sirohm_synth_M"/>
    <property type="match status" value="1"/>
</dbReference>
<dbReference type="Pfam" id="PF00590">
    <property type="entry name" value="TP_methylase"/>
    <property type="match status" value="1"/>
</dbReference>
<dbReference type="PIRSF" id="PIRSF036426">
    <property type="entry name" value="Sirohaem_synth"/>
    <property type="match status" value="1"/>
</dbReference>
<dbReference type="SUPFAM" id="SSF51735">
    <property type="entry name" value="NAD(P)-binding Rossmann-fold domains"/>
    <property type="match status" value="1"/>
</dbReference>
<dbReference type="SUPFAM" id="SSF75615">
    <property type="entry name" value="Siroheme synthase middle domains-like"/>
    <property type="match status" value="1"/>
</dbReference>
<dbReference type="SUPFAM" id="SSF53790">
    <property type="entry name" value="Tetrapyrrole methylase"/>
    <property type="match status" value="1"/>
</dbReference>
<dbReference type="PROSITE" id="PS00839">
    <property type="entry name" value="SUMT_1"/>
    <property type="match status" value="1"/>
</dbReference>
<dbReference type="PROSITE" id="PS00840">
    <property type="entry name" value="SUMT_2"/>
    <property type="match status" value="1"/>
</dbReference>
<evidence type="ECO:0000255" key="1">
    <source>
        <dbReference type="HAMAP-Rule" id="MF_01646"/>
    </source>
</evidence>
<sequence length="457" mass="50160">MDHLPIFCQLRDRDCLIVGGGDVAERKARLLLEAGARLTVNALNFIPQFTVWANEGMLTLVEGPFDETLLDSCWLAIAATDDDTVNQRVSDAAESRRIFCNVVDAPKAASFIMPSIIDRSPLMVAVSSGGTSPVLARLLREKLESLLPQHLGQVARYAGQLRARVKKQFATMGERRRFWEKFFVNDRLAQSLANADEKAVNATTERLFSEPLDHRGEVVLVGAGPGDAGLLTLKGLQQIQQADIVVYDRLVSDDIMNLVRRDADRVFVGKRAGYHCVPQEEINQILLREAQKGKRVVRLKGGDPFIFGRGGEELETLCHAGIPFSVVPGITAASGCSAYSGIPLTHRDYAQSVRLVTGHLKTGGELDWENLAAEKQTLVFYMGLNQAATIQEKLIAFGMQADMPVALVENGTSVKQRVVHGVLTQLGELAQQVESPALIIVGRVVALRDKLNWFSNH</sequence>
<accession>Q5PLV8</accession>